<sequence>MAVPARRTSKMRKRNRRGHIKLATPNLAPCPNCGELRVSHRVCPSCGYYNGKQVVKVNN</sequence>
<evidence type="ECO:0000255" key="1">
    <source>
        <dbReference type="HAMAP-Rule" id="MF_00340"/>
    </source>
</evidence>
<evidence type="ECO:0000305" key="2"/>
<dbReference type="EMBL" id="AL935263">
    <property type="protein sequence ID" value="CCC78860.1"/>
    <property type="molecule type" value="Genomic_DNA"/>
</dbReference>
<dbReference type="RefSeq" id="WP_003638547.1">
    <property type="nucleotide sequence ID" value="NC_004567.2"/>
</dbReference>
<dbReference type="RefSeq" id="YP_004889374.1">
    <property type="nucleotide sequence ID" value="NC_004567.2"/>
</dbReference>
<dbReference type="SMR" id="Q88WS9"/>
<dbReference type="STRING" id="220668.lp_1535a"/>
<dbReference type="EnsemblBacteria" id="CCC78860">
    <property type="protein sequence ID" value="CCC78860"/>
    <property type="gene ID" value="lp_1535a"/>
</dbReference>
<dbReference type="GeneID" id="89668924"/>
<dbReference type="KEGG" id="lpl:lp_1535a"/>
<dbReference type="PATRIC" id="fig|220668.9.peg.1294"/>
<dbReference type="eggNOG" id="COG0333">
    <property type="taxonomic scope" value="Bacteria"/>
</dbReference>
<dbReference type="HOGENOM" id="CLU_129084_1_3_9"/>
<dbReference type="OrthoDB" id="9812874at2"/>
<dbReference type="PhylomeDB" id="Q88WS9"/>
<dbReference type="Proteomes" id="UP000000432">
    <property type="component" value="Chromosome"/>
</dbReference>
<dbReference type="GO" id="GO:0015934">
    <property type="term" value="C:large ribosomal subunit"/>
    <property type="evidence" value="ECO:0007669"/>
    <property type="project" value="InterPro"/>
</dbReference>
<dbReference type="GO" id="GO:0003735">
    <property type="term" value="F:structural constituent of ribosome"/>
    <property type="evidence" value="ECO:0007669"/>
    <property type="project" value="InterPro"/>
</dbReference>
<dbReference type="GO" id="GO:0006412">
    <property type="term" value="P:translation"/>
    <property type="evidence" value="ECO:0007669"/>
    <property type="project" value="UniProtKB-UniRule"/>
</dbReference>
<dbReference type="HAMAP" id="MF_00340">
    <property type="entry name" value="Ribosomal_bL32"/>
    <property type="match status" value="1"/>
</dbReference>
<dbReference type="InterPro" id="IPR002677">
    <property type="entry name" value="Ribosomal_bL32"/>
</dbReference>
<dbReference type="InterPro" id="IPR044957">
    <property type="entry name" value="Ribosomal_bL32_bact"/>
</dbReference>
<dbReference type="InterPro" id="IPR011332">
    <property type="entry name" value="Ribosomal_zn-bd"/>
</dbReference>
<dbReference type="NCBIfam" id="TIGR01031">
    <property type="entry name" value="rpmF_bact"/>
    <property type="match status" value="1"/>
</dbReference>
<dbReference type="PANTHER" id="PTHR35534">
    <property type="entry name" value="50S RIBOSOMAL PROTEIN L32"/>
    <property type="match status" value="1"/>
</dbReference>
<dbReference type="PANTHER" id="PTHR35534:SF1">
    <property type="entry name" value="LARGE RIBOSOMAL SUBUNIT PROTEIN BL32"/>
    <property type="match status" value="1"/>
</dbReference>
<dbReference type="Pfam" id="PF01783">
    <property type="entry name" value="Ribosomal_L32p"/>
    <property type="match status" value="1"/>
</dbReference>
<dbReference type="SUPFAM" id="SSF57829">
    <property type="entry name" value="Zn-binding ribosomal proteins"/>
    <property type="match status" value="1"/>
</dbReference>
<organism>
    <name type="scientific">Lactiplantibacillus plantarum (strain ATCC BAA-793 / NCIMB 8826 / WCFS1)</name>
    <name type="common">Lactobacillus plantarum</name>
    <dbReference type="NCBI Taxonomy" id="220668"/>
    <lineage>
        <taxon>Bacteria</taxon>
        <taxon>Bacillati</taxon>
        <taxon>Bacillota</taxon>
        <taxon>Bacilli</taxon>
        <taxon>Lactobacillales</taxon>
        <taxon>Lactobacillaceae</taxon>
        <taxon>Lactiplantibacillus</taxon>
    </lineage>
</organism>
<reference key="1">
    <citation type="journal article" date="2003" name="Proc. Natl. Acad. Sci. U.S.A.">
        <title>Complete genome sequence of Lactobacillus plantarum WCFS1.</title>
        <authorList>
            <person name="Kleerebezem M."/>
            <person name="Boekhorst J."/>
            <person name="van Kranenburg R."/>
            <person name="Molenaar D."/>
            <person name="Kuipers O.P."/>
            <person name="Leer R."/>
            <person name="Tarchini R."/>
            <person name="Peters S.A."/>
            <person name="Sandbrink H.M."/>
            <person name="Fiers M.W.E.J."/>
            <person name="Stiekema W."/>
            <person name="Klein Lankhorst R.M."/>
            <person name="Bron P.A."/>
            <person name="Hoffer S.M."/>
            <person name="Nierop Groot M.N."/>
            <person name="Kerkhoven R."/>
            <person name="De Vries M."/>
            <person name="Ursing B."/>
            <person name="De Vos W.M."/>
            <person name="Siezen R.J."/>
        </authorList>
    </citation>
    <scope>NUCLEOTIDE SEQUENCE [LARGE SCALE GENOMIC DNA]</scope>
    <source>
        <strain>ATCC BAA-793 / NCIMB 8826 / WCFS1</strain>
    </source>
</reference>
<reference key="2">
    <citation type="journal article" date="2012" name="J. Bacteriol.">
        <title>Complete resequencing and reannotation of the Lactobacillus plantarum WCFS1 genome.</title>
        <authorList>
            <person name="Siezen R.J."/>
            <person name="Francke C."/>
            <person name="Renckens B."/>
            <person name="Boekhorst J."/>
            <person name="Wels M."/>
            <person name="Kleerebezem M."/>
            <person name="van Hijum S.A."/>
        </authorList>
    </citation>
    <scope>NUCLEOTIDE SEQUENCE [LARGE SCALE GENOMIC DNA]</scope>
    <scope>GENOME REANNOTATION</scope>
    <source>
        <strain>ATCC BAA-793 / NCIMB 8826 / WCFS1</strain>
    </source>
</reference>
<keyword id="KW-1185">Reference proteome</keyword>
<keyword id="KW-0687">Ribonucleoprotein</keyword>
<keyword id="KW-0689">Ribosomal protein</keyword>
<protein>
    <recommendedName>
        <fullName evidence="1">Large ribosomal subunit protein bL32</fullName>
    </recommendedName>
    <alternativeName>
        <fullName evidence="2">50S ribosomal protein L32</fullName>
    </alternativeName>
</protein>
<accession>Q88WS9</accession>
<accession>F9UNS1</accession>
<comment type="similarity">
    <text evidence="1">Belongs to the bacterial ribosomal protein bL32 family.</text>
</comment>
<feature type="chain" id="PRO_0000172353" description="Large ribosomal subunit protein bL32">
    <location>
        <begin position="1"/>
        <end position="59"/>
    </location>
</feature>
<proteinExistence type="inferred from homology"/>
<gene>
    <name evidence="1" type="primary">rpmF</name>
    <name type="ordered locus">lp_1535.1</name>
    <name type="ORF">lp_1535A</name>
</gene>
<name>RL32_LACPL</name>